<feature type="signal peptide" evidence="2">
    <location>
        <begin position="1"/>
        <end position="19"/>
    </location>
</feature>
<feature type="propeptide" id="PRO_0000397742" evidence="1">
    <location>
        <begin position="20"/>
        <end position="189"/>
    </location>
</feature>
<feature type="chain" id="PRO_0000397743" description="Probable neutral protease 2 homolog ARB_05817">
    <location>
        <begin position="190"/>
        <end position="375"/>
    </location>
</feature>
<feature type="active site" evidence="3">
    <location>
        <position position="318"/>
    </location>
</feature>
<feature type="binding site" evidence="3">
    <location>
        <position position="317"/>
    </location>
    <ligand>
        <name>Zn(2+)</name>
        <dbReference type="ChEBI" id="CHEBI:29105"/>
        <note>catalytic</note>
    </ligand>
</feature>
<feature type="binding site" evidence="3">
    <location>
        <position position="321"/>
    </location>
    <ligand>
        <name>Zn(2+)</name>
        <dbReference type="ChEBI" id="CHEBI:29105"/>
        <note>catalytic</note>
    </ligand>
</feature>
<feature type="binding site" evidence="3">
    <location>
        <position position="332"/>
    </location>
    <ligand>
        <name>Zn(2+)</name>
        <dbReference type="ChEBI" id="CHEBI:29105"/>
        <note>catalytic</note>
    </ligand>
</feature>
<feature type="disulfide bond" evidence="1">
    <location>
        <begin position="197"/>
        <end position="267"/>
    </location>
</feature>
<feature type="disulfide bond" evidence="1">
    <location>
        <begin position="274"/>
        <end position="292"/>
    </location>
</feature>
<proteinExistence type="inferred from homology"/>
<accession>D4ANL2</accession>
<organism>
    <name type="scientific">Arthroderma benhamiae (strain ATCC MYA-4681 / CBS 112371)</name>
    <name type="common">Trichophyton mentagrophytes</name>
    <dbReference type="NCBI Taxonomy" id="663331"/>
    <lineage>
        <taxon>Eukaryota</taxon>
        <taxon>Fungi</taxon>
        <taxon>Dikarya</taxon>
        <taxon>Ascomycota</taxon>
        <taxon>Pezizomycotina</taxon>
        <taxon>Eurotiomycetes</taxon>
        <taxon>Eurotiomycetidae</taxon>
        <taxon>Onygenales</taxon>
        <taxon>Arthrodermataceae</taxon>
        <taxon>Trichophyton</taxon>
    </lineage>
</organism>
<keyword id="KW-0165">Cleavage on pair of basic residues</keyword>
<keyword id="KW-1015">Disulfide bond</keyword>
<keyword id="KW-0378">Hydrolase</keyword>
<keyword id="KW-0479">Metal-binding</keyword>
<keyword id="KW-0482">Metalloprotease</keyword>
<keyword id="KW-0645">Protease</keyword>
<keyword id="KW-1185">Reference proteome</keyword>
<keyword id="KW-0964">Secreted</keyword>
<keyword id="KW-0732">Signal</keyword>
<keyword id="KW-0843">Virulence</keyword>
<keyword id="KW-0862">Zinc</keyword>
<keyword id="KW-0865">Zymogen</keyword>
<sequence>MQVIVALAALGSLAAPALGFSIPRGVPVSQSMIDVKLSSTGNSMVKATITNNGNRALNLLKFHTIMDSNPTRKVSIESEDGKEIQFTGMMPTYKEKDLKPSYFISLPPKGTVEHSFDIARTHDLSRGGKFTLKAEGMVPIAEENGTEITGAAKYHSNELHMTIDGEKAASVENAFGIVKRGPLTRINKRTSIDMQSCGNSQELQALTAALKASAQLSSMSAQAVSQNQDKYMEYFKDPQYMQTVQSRFQAVAQESSSTTGGGTTYHCSDTMGGCEEGVLAYTLPSQNEVFNCPIYYSDLPPLSNECHAQDQATTTLHELTHNPAVQEPFCEDNGYGYERATALSAEKAVQNADSYALFANGKLNLITLMLIIDPD</sequence>
<gene>
    <name type="ORF">ARB_05817</name>
</gene>
<dbReference type="EC" id="3.4.24.39"/>
<dbReference type="EMBL" id="ABSU01000003">
    <property type="protein sequence ID" value="EFE35773.1"/>
    <property type="molecule type" value="Genomic_DNA"/>
</dbReference>
<dbReference type="RefSeq" id="XP_003016418.1">
    <property type="nucleotide sequence ID" value="XM_003016372.1"/>
</dbReference>
<dbReference type="SMR" id="D4ANL2"/>
<dbReference type="STRING" id="663331.D4ANL2"/>
<dbReference type="MEROPS" id="M35.002"/>
<dbReference type="GeneID" id="9521901"/>
<dbReference type="KEGG" id="abe:ARB_05817"/>
<dbReference type="eggNOG" id="ENOG502SGF5">
    <property type="taxonomic scope" value="Eukaryota"/>
</dbReference>
<dbReference type="HOGENOM" id="CLU_039313_1_0_1"/>
<dbReference type="OMA" id="QTMWDGN"/>
<dbReference type="Proteomes" id="UP000008866">
    <property type="component" value="Unassembled WGS sequence"/>
</dbReference>
<dbReference type="GO" id="GO:0005576">
    <property type="term" value="C:extracellular region"/>
    <property type="evidence" value="ECO:0007669"/>
    <property type="project" value="UniProtKB-SubCell"/>
</dbReference>
<dbReference type="GO" id="GO:0046872">
    <property type="term" value="F:metal ion binding"/>
    <property type="evidence" value="ECO:0007669"/>
    <property type="project" value="UniProtKB-KW"/>
</dbReference>
<dbReference type="GO" id="GO:0004222">
    <property type="term" value="F:metalloendopeptidase activity"/>
    <property type="evidence" value="ECO:0007669"/>
    <property type="project" value="InterPro"/>
</dbReference>
<dbReference type="GO" id="GO:0006508">
    <property type="term" value="P:proteolysis"/>
    <property type="evidence" value="ECO:0007669"/>
    <property type="project" value="UniProtKB-KW"/>
</dbReference>
<dbReference type="CDD" id="cd11008">
    <property type="entry name" value="M35_deuterolysin_like"/>
    <property type="match status" value="1"/>
</dbReference>
<dbReference type="Gene3D" id="2.60.40.2970">
    <property type="match status" value="1"/>
</dbReference>
<dbReference type="Gene3D" id="3.40.390.10">
    <property type="entry name" value="Collagenase (Catalytic Domain)"/>
    <property type="match status" value="1"/>
</dbReference>
<dbReference type="InterPro" id="IPR050414">
    <property type="entry name" value="Fungal_M35_metalloproteases"/>
</dbReference>
<dbReference type="InterPro" id="IPR024079">
    <property type="entry name" value="MetalloPept_cat_dom_sf"/>
</dbReference>
<dbReference type="InterPro" id="IPR001384">
    <property type="entry name" value="Peptidase_M35"/>
</dbReference>
<dbReference type="PANTHER" id="PTHR37016">
    <property type="match status" value="1"/>
</dbReference>
<dbReference type="PANTHER" id="PTHR37016:SF3">
    <property type="entry name" value="NEUTRAL PROTEASE 2-RELATED"/>
    <property type="match status" value="1"/>
</dbReference>
<dbReference type="Pfam" id="PF02102">
    <property type="entry name" value="Peptidase_M35"/>
    <property type="match status" value="1"/>
</dbReference>
<dbReference type="PRINTS" id="PR00768">
    <property type="entry name" value="DEUTEROLYSIN"/>
</dbReference>
<dbReference type="SUPFAM" id="SSF55486">
    <property type="entry name" value="Metalloproteases ('zincins'), catalytic domain"/>
    <property type="match status" value="1"/>
</dbReference>
<dbReference type="PROSITE" id="PS00142">
    <property type="entry name" value="ZINC_PROTEASE"/>
    <property type="match status" value="1"/>
</dbReference>
<evidence type="ECO:0000250" key="1"/>
<evidence type="ECO:0000255" key="2"/>
<evidence type="ECO:0000255" key="3">
    <source>
        <dbReference type="PROSITE-ProRule" id="PRU10095"/>
    </source>
</evidence>
<evidence type="ECO:0000305" key="4"/>
<comment type="function">
    <text evidence="1">Probable secreted metalloprotease that shows high activities on basic nuclear substrates such as histone and protamine (By similarity). May be involved in virulence.</text>
</comment>
<comment type="catalytic activity">
    <reaction>
        <text>Preferential cleavage of bonds with hydrophobic residues in P1'. Also 3-Asn-|-Gln-4 and 8-Gly-|-Ser-9 bonds in insulin B chain.</text>
        <dbReference type="EC" id="3.4.24.39"/>
    </reaction>
</comment>
<comment type="cofactor">
    <cofactor evidence="1">
        <name>Zn(2+)</name>
        <dbReference type="ChEBI" id="CHEBI:29105"/>
    </cofactor>
    <text evidence="1">Binds 1 zinc ion per subunit.</text>
</comment>
<comment type="subcellular location">
    <subcellularLocation>
        <location evidence="4">Secreted</location>
    </subcellularLocation>
</comment>
<comment type="similarity">
    <text evidence="4">Belongs to the peptidase M35 family.</text>
</comment>
<reference key="1">
    <citation type="journal article" date="2011" name="Genome Biol.">
        <title>Comparative and functional genomics provide insights into the pathogenicity of dermatophytic fungi.</title>
        <authorList>
            <person name="Burmester A."/>
            <person name="Shelest E."/>
            <person name="Gloeckner G."/>
            <person name="Heddergott C."/>
            <person name="Schindler S."/>
            <person name="Staib P."/>
            <person name="Heidel A."/>
            <person name="Felder M."/>
            <person name="Petzold A."/>
            <person name="Szafranski K."/>
            <person name="Feuermann M."/>
            <person name="Pedruzzi I."/>
            <person name="Priebe S."/>
            <person name="Groth M."/>
            <person name="Winkler R."/>
            <person name="Li W."/>
            <person name="Kniemeyer O."/>
            <person name="Schroeckh V."/>
            <person name="Hertweck C."/>
            <person name="Hube B."/>
            <person name="White T.C."/>
            <person name="Platzer M."/>
            <person name="Guthke R."/>
            <person name="Heitman J."/>
            <person name="Woestemeyer J."/>
            <person name="Zipfel P.F."/>
            <person name="Monod M."/>
            <person name="Brakhage A.A."/>
        </authorList>
    </citation>
    <scope>NUCLEOTIDE SEQUENCE [LARGE SCALE GENOMIC DNA]</scope>
    <source>
        <strain>ATCC MYA-4681 / CBS 112371</strain>
    </source>
</reference>
<protein>
    <recommendedName>
        <fullName>Probable neutral protease 2 homolog ARB_05817</fullName>
        <ecNumber>3.4.24.39</ecNumber>
    </recommendedName>
    <alternativeName>
        <fullName>Deuterolysin ARB_05817</fullName>
    </alternativeName>
</protein>
<name>NPIIB_ARTBC</name>